<gene>
    <name evidence="1" type="primary">atpC</name>
    <name type="ordered locus">HPG27_1076</name>
</gene>
<evidence type="ECO:0000255" key="1">
    <source>
        <dbReference type="HAMAP-Rule" id="MF_00530"/>
    </source>
</evidence>
<organism>
    <name type="scientific">Helicobacter pylori (strain G27)</name>
    <dbReference type="NCBI Taxonomy" id="563041"/>
    <lineage>
        <taxon>Bacteria</taxon>
        <taxon>Pseudomonadati</taxon>
        <taxon>Campylobacterota</taxon>
        <taxon>Epsilonproteobacteria</taxon>
        <taxon>Campylobacterales</taxon>
        <taxon>Helicobacteraceae</taxon>
        <taxon>Helicobacter</taxon>
    </lineage>
</organism>
<accession>B5Z8C9</accession>
<feature type="chain" id="PRO_1000127864" description="ATP synthase epsilon chain">
    <location>
        <begin position="1"/>
        <end position="123"/>
    </location>
</feature>
<sequence>MALLKISVVVPEGEVYTGEVKSVVLPGVEGEFGVLYGHSNMITLLQAGVIEIETENQKEHIAINWGYAEVTKERVDILADGAVFIKKESDDRDDAISRAKKLLEDASSDRLAVSSVLAKIESL</sequence>
<proteinExistence type="inferred from homology"/>
<name>ATPE_HELPG</name>
<reference key="1">
    <citation type="journal article" date="2009" name="J. Bacteriol.">
        <title>The complete genome sequence of Helicobacter pylori strain G27.</title>
        <authorList>
            <person name="Baltrus D.A."/>
            <person name="Amieva M.R."/>
            <person name="Covacci A."/>
            <person name="Lowe T.M."/>
            <person name="Merrell D.S."/>
            <person name="Ottemann K.M."/>
            <person name="Stein M."/>
            <person name="Salama N.R."/>
            <person name="Guillemin K."/>
        </authorList>
    </citation>
    <scope>NUCLEOTIDE SEQUENCE [LARGE SCALE GENOMIC DNA]</scope>
    <source>
        <strain>G27</strain>
    </source>
</reference>
<comment type="function">
    <text evidence="1">Produces ATP from ADP in the presence of a proton gradient across the membrane.</text>
</comment>
<comment type="subunit">
    <text evidence="1">F-type ATPases have 2 components, CF(1) - the catalytic core - and CF(0) - the membrane proton channel. CF(1) has five subunits: alpha(3), beta(3), gamma(1), delta(1), epsilon(1). CF(0) has three main subunits: a, b and c.</text>
</comment>
<comment type="subcellular location">
    <subcellularLocation>
        <location evidence="1">Cell inner membrane</location>
        <topology evidence="1">Peripheral membrane protein</topology>
    </subcellularLocation>
</comment>
<comment type="similarity">
    <text evidence="1">Belongs to the ATPase epsilon chain family.</text>
</comment>
<protein>
    <recommendedName>
        <fullName evidence="1">ATP synthase epsilon chain</fullName>
    </recommendedName>
    <alternativeName>
        <fullName evidence="1">ATP synthase F1 sector epsilon subunit</fullName>
    </alternativeName>
    <alternativeName>
        <fullName evidence="1">F-ATPase epsilon subunit</fullName>
    </alternativeName>
</protein>
<keyword id="KW-0066">ATP synthesis</keyword>
<keyword id="KW-0997">Cell inner membrane</keyword>
<keyword id="KW-1003">Cell membrane</keyword>
<keyword id="KW-0139">CF(1)</keyword>
<keyword id="KW-0375">Hydrogen ion transport</keyword>
<keyword id="KW-0406">Ion transport</keyword>
<keyword id="KW-0472">Membrane</keyword>
<keyword id="KW-1185">Reference proteome</keyword>
<keyword id="KW-0813">Transport</keyword>
<dbReference type="EMBL" id="CP001173">
    <property type="protein sequence ID" value="ACI27828.1"/>
    <property type="molecule type" value="Genomic_DNA"/>
</dbReference>
<dbReference type="RefSeq" id="WP_001196318.1">
    <property type="nucleotide sequence ID" value="NC_011333.1"/>
</dbReference>
<dbReference type="SMR" id="B5Z8C9"/>
<dbReference type="KEGG" id="hpg:HPG27_1076"/>
<dbReference type="HOGENOM" id="CLU_084338_2_1_7"/>
<dbReference type="Proteomes" id="UP000001735">
    <property type="component" value="Chromosome"/>
</dbReference>
<dbReference type="GO" id="GO:0005886">
    <property type="term" value="C:plasma membrane"/>
    <property type="evidence" value="ECO:0007669"/>
    <property type="project" value="UniProtKB-SubCell"/>
</dbReference>
<dbReference type="GO" id="GO:0045259">
    <property type="term" value="C:proton-transporting ATP synthase complex"/>
    <property type="evidence" value="ECO:0007669"/>
    <property type="project" value="UniProtKB-KW"/>
</dbReference>
<dbReference type="GO" id="GO:0005524">
    <property type="term" value="F:ATP binding"/>
    <property type="evidence" value="ECO:0007669"/>
    <property type="project" value="UniProtKB-UniRule"/>
</dbReference>
<dbReference type="GO" id="GO:0046933">
    <property type="term" value="F:proton-transporting ATP synthase activity, rotational mechanism"/>
    <property type="evidence" value="ECO:0007669"/>
    <property type="project" value="UniProtKB-UniRule"/>
</dbReference>
<dbReference type="CDD" id="cd12152">
    <property type="entry name" value="F1-ATPase_delta"/>
    <property type="match status" value="1"/>
</dbReference>
<dbReference type="FunFam" id="2.60.15.10:FF:000006">
    <property type="entry name" value="ATP synthase epsilon chain"/>
    <property type="match status" value="1"/>
</dbReference>
<dbReference type="Gene3D" id="2.60.15.10">
    <property type="entry name" value="F0F1 ATP synthase delta/epsilon subunit, N-terminal"/>
    <property type="match status" value="1"/>
</dbReference>
<dbReference type="HAMAP" id="MF_00530">
    <property type="entry name" value="ATP_synth_epsil_bac"/>
    <property type="match status" value="1"/>
</dbReference>
<dbReference type="InterPro" id="IPR001469">
    <property type="entry name" value="ATP_synth_F1_dsu/esu"/>
</dbReference>
<dbReference type="InterPro" id="IPR020546">
    <property type="entry name" value="ATP_synth_F1_dsu/esu_N"/>
</dbReference>
<dbReference type="InterPro" id="IPR036771">
    <property type="entry name" value="ATPsynth_dsu/esu_N"/>
</dbReference>
<dbReference type="NCBIfam" id="TIGR01216">
    <property type="entry name" value="ATP_synt_epsi"/>
    <property type="match status" value="1"/>
</dbReference>
<dbReference type="PANTHER" id="PTHR13822">
    <property type="entry name" value="ATP SYNTHASE DELTA/EPSILON CHAIN"/>
    <property type="match status" value="1"/>
</dbReference>
<dbReference type="PANTHER" id="PTHR13822:SF10">
    <property type="entry name" value="ATP SYNTHASE EPSILON CHAIN, CHLOROPLASTIC"/>
    <property type="match status" value="1"/>
</dbReference>
<dbReference type="Pfam" id="PF02823">
    <property type="entry name" value="ATP-synt_DE_N"/>
    <property type="match status" value="1"/>
</dbReference>
<dbReference type="SUPFAM" id="SSF51344">
    <property type="entry name" value="Epsilon subunit of F1F0-ATP synthase N-terminal domain"/>
    <property type="match status" value="1"/>
</dbReference>